<accession>A1RYM0</accession>
<feature type="chain" id="PRO_0000334987" description="Ribonuclease HII">
    <location>
        <begin position="1"/>
        <end position="213"/>
    </location>
</feature>
<feature type="domain" description="RNase H type-2" evidence="2">
    <location>
        <begin position="2"/>
        <end position="213"/>
    </location>
</feature>
<feature type="binding site" evidence="1">
    <location>
        <position position="8"/>
    </location>
    <ligand>
        <name>a divalent metal cation</name>
        <dbReference type="ChEBI" id="CHEBI:60240"/>
    </ligand>
</feature>
<feature type="binding site" evidence="1">
    <location>
        <position position="9"/>
    </location>
    <ligand>
        <name>a divalent metal cation</name>
        <dbReference type="ChEBI" id="CHEBI:60240"/>
    </ligand>
</feature>
<feature type="binding site" evidence="1">
    <location>
        <position position="113"/>
    </location>
    <ligand>
        <name>a divalent metal cation</name>
        <dbReference type="ChEBI" id="CHEBI:60240"/>
    </ligand>
</feature>
<organism>
    <name type="scientific">Thermofilum pendens (strain DSM 2475 / Hrk 5)</name>
    <dbReference type="NCBI Taxonomy" id="368408"/>
    <lineage>
        <taxon>Archaea</taxon>
        <taxon>Thermoproteota</taxon>
        <taxon>Thermoprotei</taxon>
        <taxon>Thermofilales</taxon>
        <taxon>Thermofilaceae</taxon>
        <taxon>Thermofilum</taxon>
    </lineage>
</organism>
<comment type="function">
    <text evidence="1">Endonuclease that specifically degrades the RNA of RNA-DNA hybrids.</text>
</comment>
<comment type="catalytic activity">
    <reaction evidence="1">
        <text>Endonucleolytic cleavage to 5'-phosphomonoester.</text>
        <dbReference type="EC" id="3.1.26.4"/>
    </reaction>
</comment>
<comment type="cofactor">
    <cofactor evidence="1">
        <name>Mn(2+)</name>
        <dbReference type="ChEBI" id="CHEBI:29035"/>
    </cofactor>
    <cofactor evidence="1">
        <name>Mg(2+)</name>
        <dbReference type="ChEBI" id="CHEBI:18420"/>
    </cofactor>
    <text evidence="1">Manganese or magnesium. Binds 1 divalent metal ion per monomer in the absence of substrate. May bind a second metal ion after substrate binding.</text>
</comment>
<comment type="subcellular location">
    <subcellularLocation>
        <location evidence="1">Cytoplasm</location>
    </subcellularLocation>
</comment>
<comment type="similarity">
    <text evidence="1">Belongs to the RNase HII family.</text>
</comment>
<reference key="1">
    <citation type="journal article" date="2008" name="J. Bacteriol.">
        <title>Genome sequence of Thermofilum pendens reveals an exceptional loss of biosynthetic pathways without genome reduction.</title>
        <authorList>
            <person name="Anderson I."/>
            <person name="Rodriguez J."/>
            <person name="Susanti D."/>
            <person name="Porat I."/>
            <person name="Reich C."/>
            <person name="Ulrich L.E."/>
            <person name="Elkins J.G."/>
            <person name="Mavromatis K."/>
            <person name="Lykidis A."/>
            <person name="Kim E."/>
            <person name="Thompson L.S."/>
            <person name="Nolan M."/>
            <person name="Land M."/>
            <person name="Copeland A."/>
            <person name="Lapidus A."/>
            <person name="Lucas S."/>
            <person name="Detter C."/>
            <person name="Zhulin I.B."/>
            <person name="Olsen G.J."/>
            <person name="Whitman W."/>
            <person name="Mukhopadhyay B."/>
            <person name="Bristow J."/>
            <person name="Kyrpides N."/>
        </authorList>
    </citation>
    <scope>NUCLEOTIDE SEQUENCE [LARGE SCALE GENOMIC DNA]</scope>
    <source>
        <strain>DSM 2475 / Hrk 5</strain>
    </source>
</reference>
<gene>
    <name evidence="1" type="primary">rnhB</name>
    <name type="ordered locus">Tpen_0899</name>
</gene>
<protein>
    <recommendedName>
        <fullName evidence="1">Ribonuclease HII</fullName>
        <shortName evidence="1">RNase HII</shortName>
        <ecNumber evidence="1">3.1.26.4</ecNumber>
    </recommendedName>
</protein>
<name>RNH2_THEPD</name>
<proteinExistence type="inferred from homology"/>
<sequence>MGRVAGIDEAGRGPMLGPMVVAIVVCPEEKVPLLRNMGVRDSKALSPRRRLLLSRAIPSVGCSVKVRVVEPQEIDCAVRGECYENLNHLEAAVFAQLINEVLSEGELEVVYMDSPDPVPSRFEERVRALLKGQVRIVAENGADEKYTIVGAASIVAKETRDEIINALKKTYGDFGSGYPSDPRTLRFAEEWVRKHGEPPPIARKEWATWKRLR</sequence>
<dbReference type="EC" id="3.1.26.4" evidence="1"/>
<dbReference type="EMBL" id="CP000505">
    <property type="protein sequence ID" value="ABL78300.1"/>
    <property type="molecule type" value="Genomic_DNA"/>
</dbReference>
<dbReference type="RefSeq" id="WP_011752565.1">
    <property type="nucleotide sequence ID" value="NC_008698.1"/>
</dbReference>
<dbReference type="SMR" id="A1RYM0"/>
<dbReference type="STRING" id="368408.Tpen_0899"/>
<dbReference type="EnsemblBacteria" id="ABL78300">
    <property type="protein sequence ID" value="ABL78300"/>
    <property type="gene ID" value="Tpen_0899"/>
</dbReference>
<dbReference type="GeneID" id="4602222"/>
<dbReference type="KEGG" id="tpe:Tpen_0899"/>
<dbReference type="eggNOG" id="arCOG04121">
    <property type="taxonomic scope" value="Archaea"/>
</dbReference>
<dbReference type="HOGENOM" id="CLU_036532_0_4_2"/>
<dbReference type="Proteomes" id="UP000000641">
    <property type="component" value="Chromosome"/>
</dbReference>
<dbReference type="GO" id="GO:0005737">
    <property type="term" value="C:cytoplasm"/>
    <property type="evidence" value="ECO:0007669"/>
    <property type="project" value="UniProtKB-SubCell"/>
</dbReference>
<dbReference type="GO" id="GO:0032299">
    <property type="term" value="C:ribonuclease H2 complex"/>
    <property type="evidence" value="ECO:0007669"/>
    <property type="project" value="TreeGrafter"/>
</dbReference>
<dbReference type="GO" id="GO:0030145">
    <property type="term" value="F:manganese ion binding"/>
    <property type="evidence" value="ECO:0007669"/>
    <property type="project" value="UniProtKB-UniRule"/>
</dbReference>
<dbReference type="GO" id="GO:0003723">
    <property type="term" value="F:RNA binding"/>
    <property type="evidence" value="ECO:0007669"/>
    <property type="project" value="InterPro"/>
</dbReference>
<dbReference type="GO" id="GO:0004523">
    <property type="term" value="F:RNA-DNA hybrid ribonuclease activity"/>
    <property type="evidence" value="ECO:0007669"/>
    <property type="project" value="UniProtKB-UniRule"/>
</dbReference>
<dbReference type="GO" id="GO:0043137">
    <property type="term" value="P:DNA replication, removal of RNA primer"/>
    <property type="evidence" value="ECO:0007669"/>
    <property type="project" value="TreeGrafter"/>
</dbReference>
<dbReference type="GO" id="GO:0006298">
    <property type="term" value="P:mismatch repair"/>
    <property type="evidence" value="ECO:0007669"/>
    <property type="project" value="TreeGrafter"/>
</dbReference>
<dbReference type="CDD" id="cd07180">
    <property type="entry name" value="RNase_HII_archaea_like"/>
    <property type="match status" value="1"/>
</dbReference>
<dbReference type="Gene3D" id="3.30.420.10">
    <property type="entry name" value="Ribonuclease H-like superfamily/Ribonuclease H"/>
    <property type="match status" value="1"/>
</dbReference>
<dbReference type="Gene3D" id="1.10.10.460">
    <property type="entry name" value="Ribonuclease hii. Domain 2"/>
    <property type="match status" value="1"/>
</dbReference>
<dbReference type="HAMAP" id="MF_00052_A">
    <property type="entry name" value="RNase_HII_A"/>
    <property type="match status" value="1"/>
</dbReference>
<dbReference type="InterPro" id="IPR004649">
    <property type="entry name" value="RNase_H2_suA"/>
</dbReference>
<dbReference type="InterPro" id="IPR001352">
    <property type="entry name" value="RNase_HII/HIII"/>
</dbReference>
<dbReference type="InterPro" id="IPR024567">
    <property type="entry name" value="RNase_HII/HIII_dom"/>
</dbReference>
<dbReference type="InterPro" id="IPR020787">
    <property type="entry name" value="RNase_HII_arc"/>
</dbReference>
<dbReference type="InterPro" id="IPR023160">
    <property type="entry name" value="RNase_HII_hlx-loop-hlx_cap_dom"/>
</dbReference>
<dbReference type="InterPro" id="IPR012337">
    <property type="entry name" value="RNaseH-like_sf"/>
</dbReference>
<dbReference type="InterPro" id="IPR036397">
    <property type="entry name" value="RNaseH_sf"/>
</dbReference>
<dbReference type="NCBIfam" id="TIGR00729">
    <property type="entry name" value="ribonuclease HII"/>
    <property type="match status" value="1"/>
</dbReference>
<dbReference type="PANTHER" id="PTHR10954:SF23">
    <property type="entry name" value="RIBONUCLEASE"/>
    <property type="match status" value="1"/>
</dbReference>
<dbReference type="PANTHER" id="PTHR10954">
    <property type="entry name" value="RIBONUCLEASE H2 SUBUNIT A"/>
    <property type="match status" value="1"/>
</dbReference>
<dbReference type="Pfam" id="PF01351">
    <property type="entry name" value="RNase_HII"/>
    <property type="match status" value="1"/>
</dbReference>
<dbReference type="SUPFAM" id="SSF53098">
    <property type="entry name" value="Ribonuclease H-like"/>
    <property type="match status" value="1"/>
</dbReference>
<dbReference type="PROSITE" id="PS51975">
    <property type="entry name" value="RNASE_H_2"/>
    <property type="match status" value="1"/>
</dbReference>
<keyword id="KW-0963">Cytoplasm</keyword>
<keyword id="KW-0255">Endonuclease</keyword>
<keyword id="KW-0378">Hydrolase</keyword>
<keyword id="KW-0464">Manganese</keyword>
<keyword id="KW-0479">Metal-binding</keyword>
<keyword id="KW-0540">Nuclease</keyword>
<keyword id="KW-1185">Reference proteome</keyword>
<evidence type="ECO:0000255" key="1">
    <source>
        <dbReference type="HAMAP-Rule" id="MF_00052"/>
    </source>
</evidence>
<evidence type="ECO:0000255" key="2">
    <source>
        <dbReference type="PROSITE-ProRule" id="PRU01319"/>
    </source>
</evidence>